<protein>
    <recommendedName>
        <fullName evidence="1">Ubiquinone/menaquinone biosynthesis C-methyltransferase UbiE</fullName>
        <ecNumber evidence="1">2.1.1.163</ecNumber>
        <ecNumber evidence="1">2.1.1.201</ecNumber>
    </recommendedName>
    <alternativeName>
        <fullName evidence="1">2-methoxy-6-polyprenyl-1,4-benzoquinol methylase</fullName>
    </alternativeName>
    <alternativeName>
        <fullName evidence="1">Demethylmenaquinone methyltransferase</fullName>
    </alternativeName>
</protein>
<feature type="chain" id="PRO_1000056233" description="Ubiquinone/menaquinone biosynthesis C-methyltransferase UbiE">
    <location>
        <begin position="1"/>
        <end position="243"/>
    </location>
</feature>
<feature type="binding site" evidence="1">
    <location>
        <position position="69"/>
    </location>
    <ligand>
        <name>S-adenosyl-L-methionine</name>
        <dbReference type="ChEBI" id="CHEBI:59789"/>
    </ligand>
</feature>
<feature type="binding site" evidence="1">
    <location>
        <position position="90"/>
    </location>
    <ligand>
        <name>S-adenosyl-L-methionine</name>
        <dbReference type="ChEBI" id="CHEBI:59789"/>
    </ligand>
</feature>
<feature type="binding site" evidence="1">
    <location>
        <begin position="116"/>
        <end position="117"/>
    </location>
    <ligand>
        <name>S-adenosyl-L-methionine</name>
        <dbReference type="ChEBI" id="CHEBI:59789"/>
    </ligand>
</feature>
<reference key="1">
    <citation type="journal article" date="2010" name="Genome Biol. Evol.">
        <title>Continuing evolution of Burkholderia mallei through genome reduction and large-scale rearrangements.</title>
        <authorList>
            <person name="Losada L."/>
            <person name="Ronning C.M."/>
            <person name="DeShazer D."/>
            <person name="Woods D."/>
            <person name="Fedorova N."/>
            <person name="Kim H.S."/>
            <person name="Shabalina S.A."/>
            <person name="Pearson T.R."/>
            <person name="Brinkac L."/>
            <person name="Tan P."/>
            <person name="Nandi T."/>
            <person name="Crabtree J."/>
            <person name="Badger J."/>
            <person name="Beckstrom-Sternberg S."/>
            <person name="Saqib M."/>
            <person name="Schutzer S.E."/>
            <person name="Keim P."/>
            <person name="Nierman W.C."/>
        </authorList>
    </citation>
    <scope>NUCLEOTIDE SEQUENCE [LARGE SCALE GENOMIC DNA]</scope>
    <source>
        <strain>668</strain>
    </source>
</reference>
<name>UBIE_BURP6</name>
<organism>
    <name type="scientific">Burkholderia pseudomallei (strain 668)</name>
    <dbReference type="NCBI Taxonomy" id="320373"/>
    <lineage>
        <taxon>Bacteria</taxon>
        <taxon>Pseudomonadati</taxon>
        <taxon>Pseudomonadota</taxon>
        <taxon>Betaproteobacteria</taxon>
        <taxon>Burkholderiales</taxon>
        <taxon>Burkholderiaceae</taxon>
        <taxon>Burkholderia</taxon>
        <taxon>pseudomallei group</taxon>
    </lineage>
</organism>
<proteinExistence type="inferred from homology"/>
<accession>A3N5U8</accession>
<comment type="function">
    <text evidence="1">Methyltransferase required for the conversion of demethylmenaquinol (DMKH2) to menaquinol (MKH2) and the conversion of 2-polyprenyl-6-methoxy-1,4-benzoquinol (DDMQH2) to 2-polyprenyl-3-methyl-6-methoxy-1,4-benzoquinol (DMQH2).</text>
</comment>
<comment type="catalytic activity">
    <reaction evidence="1">
        <text>a 2-demethylmenaquinol + S-adenosyl-L-methionine = a menaquinol + S-adenosyl-L-homocysteine + H(+)</text>
        <dbReference type="Rhea" id="RHEA:42640"/>
        <dbReference type="Rhea" id="RHEA-COMP:9539"/>
        <dbReference type="Rhea" id="RHEA-COMP:9563"/>
        <dbReference type="ChEBI" id="CHEBI:15378"/>
        <dbReference type="ChEBI" id="CHEBI:18151"/>
        <dbReference type="ChEBI" id="CHEBI:55437"/>
        <dbReference type="ChEBI" id="CHEBI:57856"/>
        <dbReference type="ChEBI" id="CHEBI:59789"/>
        <dbReference type="EC" id="2.1.1.163"/>
    </reaction>
</comment>
<comment type="catalytic activity">
    <reaction evidence="1">
        <text>a 2-methoxy-6-(all-trans-polyprenyl)benzene-1,4-diol + S-adenosyl-L-methionine = a 5-methoxy-2-methyl-3-(all-trans-polyprenyl)benzene-1,4-diol + S-adenosyl-L-homocysteine + H(+)</text>
        <dbReference type="Rhea" id="RHEA:28286"/>
        <dbReference type="Rhea" id="RHEA-COMP:10858"/>
        <dbReference type="Rhea" id="RHEA-COMP:10859"/>
        <dbReference type="ChEBI" id="CHEBI:15378"/>
        <dbReference type="ChEBI" id="CHEBI:57856"/>
        <dbReference type="ChEBI" id="CHEBI:59789"/>
        <dbReference type="ChEBI" id="CHEBI:84166"/>
        <dbReference type="ChEBI" id="CHEBI:84167"/>
        <dbReference type="EC" id="2.1.1.201"/>
    </reaction>
</comment>
<comment type="pathway">
    <text evidence="1">Quinol/quinone metabolism; menaquinone biosynthesis; menaquinol from 1,4-dihydroxy-2-naphthoate: step 2/2.</text>
</comment>
<comment type="pathway">
    <text evidence="1">Cofactor biosynthesis; ubiquinone biosynthesis.</text>
</comment>
<comment type="similarity">
    <text evidence="1">Belongs to the class I-like SAM-binding methyltransferase superfamily. MenG/UbiE family.</text>
</comment>
<evidence type="ECO:0000255" key="1">
    <source>
        <dbReference type="HAMAP-Rule" id="MF_01813"/>
    </source>
</evidence>
<sequence>MSKTHFGFETVEENEKAKKVAGVFHSVASNYDLMNDLMSAGLHRAWKAFTIAQANVRPGGKVLDIAAGTGDLTKAFAKAAGPTGEVWHTDINESMLRVGRDRLLDKGVVTPSLLCDAEKLPFPDNYFDVVTVAFGLRNMTHKDSALAEMRRVAKPGGRVMVLEFSKVWEPLKKAYDVYSFKVLPWLGDKFAKDADSYRYLAESIRMHPDQETLKTMMEQAGLDAVKYYNLSGGVVALHVGTKY</sequence>
<keyword id="KW-0474">Menaquinone biosynthesis</keyword>
<keyword id="KW-0489">Methyltransferase</keyword>
<keyword id="KW-0949">S-adenosyl-L-methionine</keyword>
<keyword id="KW-0808">Transferase</keyword>
<keyword id="KW-0831">Ubiquinone biosynthesis</keyword>
<dbReference type="EC" id="2.1.1.163" evidence="1"/>
<dbReference type="EC" id="2.1.1.201" evidence="1"/>
<dbReference type="EMBL" id="CP000570">
    <property type="protein sequence ID" value="ABN82818.1"/>
    <property type="molecule type" value="Genomic_DNA"/>
</dbReference>
<dbReference type="RefSeq" id="WP_004189973.1">
    <property type="nucleotide sequence ID" value="NC_009074.1"/>
</dbReference>
<dbReference type="SMR" id="A3N5U8"/>
<dbReference type="GeneID" id="93059149"/>
<dbReference type="KEGG" id="bpd:BURPS668_0667"/>
<dbReference type="HOGENOM" id="CLU_037990_0_0_4"/>
<dbReference type="UniPathway" id="UPA00079">
    <property type="reaction ID" value="UER00169"/>
</dbReference>
<dbReference type="UniPathway" id="UPA00232"/>
<dbReference type="GO" id="GO:0008425">
    <property type="term" value="F:2-methoxy-6-polyprenyl-1,4-benzoquinol methyltransferase activity"/>
    <property type="evidence" value="ECO:0007669"/>
    <property type="project" value="UniProtKB-UniRule"/>
</dbReference>
<dbReference type="GO" id="GO:0043770">
    <property type="term" value="F:demethylmenaquinone methyltransferase activity"/>
    <property type="evidence" value="ECO:0007669"/>
    <property type="project" value="UniProtKB-UniRule"/>
</dbReference>
<dbReference type="GO" id="GO:0009060">
    <property type="term" value="P:aerobic respiration"/>
    <property type="evidence" value="ECO:0007669"/>
    <property type="project" value="UniProtKB-UniRule"/>
</dbReference>
<dbReference type="GO" id="GO:0009234">
    <property type="term" value="P:menaquinone biosynthetic process"/>
    <property type="evidence" value="ECO:0007669"/>
    <property type="project" value="UniProtKB-UniRule"/>
</dbReference>
<dbReference type="GO" id="GO:0032259">
    <property type="term" value="P:methylation"/>
    <property type="evidence" value="ECO:0007669"/>
    <property type="project" value="UniProtKB-KW"/>
</dbReference>
<dbReference type="CDD" id="cd02440">
    <property type="entry name" value="AdoMet_MTases"/>
    <property type="match status" value="1"/>
</dbReference>
<dbReference type="Gene3D" id="3.40.50.150">
    <property type="entry name" value="Vaccinia Virus protein VP39"/>
    <property type="match status" value="1"/>
</dbReference>
<dbReference type="HAMAP" id="MF_01813">
    <property type="entry name" value="MenG_UbiE_methyltr"/>
    <property type="match status" value="1"/>
</dbReference>
<dbReference type="InterPro" id="IPR029063">
    <property type="entry name" value="SAM-dependent_MTases_sf"/>
</dbReference>
<dbReference type="InterPro" id="IPR004033">
    <property type="entry name" value="UbiE/COQ5_MeTrFase"/>
</dbReference>
<dbReference type="InterPro" id="IPR023576">
    <property type="entry name" value="UbiE/COQ5_MeTrFase_CS"/>
</dbReference>
<dbReference type="NCBIfam" id="TIGR01934">
    <property type="entry name" value="MenG_MenH_UbiE"/>
    <property type="match status" value="1"/>
</dbReference>
<dbReference type="NCBIfam" id="NF001240">
    <property type="entry name" value="PRK00216.1-1"/>
    <property type="match status" value="1"/>
</dbReference>
<dbReference type="NCBIfam" id="NF001244">
    <property type="entry name" value="PRK00216.1-5"/>
    <property type="match status" value="1"/>
</dbReference>
<dbReference type="PANTHER" id="PTHR43591:SF24">
    <property type="entry name" value="2-METHOXY-6-POLYPRENYL-1,4-BENZOQUINOL METHYLASE, MITOCHONDRIAL"/>
    <property type="match status" value="1"/>
</dbReference>
<dbReference type="PANTHER" id="PTHR43591">
    <property type="entry name" value="METHYLTRANSFERASE"/>
    <property type="match status" value="1"/>
</dbReference>
<dbReference type="Pfam" id="PF01209">
    <property type="entry name" value="Ubie_methyltran"/>
    <property type="match status" value="1"/>
</dbReference>
<dbReference type="SUPFAM" id="SSF53335">
    <property type="entry name" value="S-adenosyl-L-methionine-dependent methyltransferases"/>
    <property type="match status" value="1"/>
</dbReference>
<dbReference type="PROSITE" id="PS51608">
    <property type="entry name" value="SAM_MT_UBIE"/>
    <property type="match status" value="1"/>
</dbReference>
<dbReference type="PROSITE" id="PS01183">
    <property type="entry name" value="UBIE_1"/>
    <property type="match status" value="1"/>
</dbReference>
<gene>
    <name evidence="1" type="primary">ubiE</name>
    <name type="ordered locus">BURPS668_0667</name>
</gene>